<evidence type="ECO:0000269" key="1">
    <source>
    </source>
</evidence>
<evidence type="ECO:0000305" key="2"/>
<proteinExistence type="evidence at protein level"/>
<gene>
    <name type="primary">FRL4B</name>
    <name type="ordered locus">At4g14900</name>
    <name type="ORF">dl3490c</name>
    <name type="ORF">FCAALL.410</name>
</gene>
<sequence>MESSPDPGELIKSSQPSFFEFQKQASLMTSCNLLWKELSEHFTSMEQNLMKKSEALRQMIETLDNQTQSSIELLKHREVTIDHSVEIAEGKVEERVRAALDSLEKARDCGDEDTGEVDDGDGLLSALKSLCLKMDARGFWGFVIARKKELENLRSQIPVALVDCVDPPKLVLEAVSEVFPVDKRGGGEKVSNDFGWACVVILESLIPVMVDPVMGKSRLLVTPSVKEKAKEIAETWKASLEERGGIENVKTPDVHTFLQHLVTFGIVKKDDLALYRKLVVGSAWRKQMPKLAVSVGLGDQMPDMIEELIIRGQQLDAVHFTFEVGLVHLFPPVPLLKAYLRDAKKATALITDDSNNSGRSAHLVARKEQSALRAVLKCIEEYKLEEEFPPENLKKRLDQLEKTKTEKRKPAVIPANKRTRASYSGPMPPAKAGRITNAYVSSFPPPPPTFIRSQSHSPQYGVPAYTTSPPTIYSNRSPPYQYSPEAVHGSYQTSPVSYPTAYGTYCSPVAAPPPPVYHPHPHHHHHIQHAYY</sequence>
<dbReference type="EMBL" id="AL117321">
    <property type="status" value="NOT_ANNOTATED_CDS"/>
    <property type="molecule type" value="Genomic_DNA"/>
</dbReference>
<dbReference type="EMBL" id="CP002687">
    <property type="protein sequence ID" value="AEE83517.1"/>
    <property type="molecule type" value="Genomic_DNA"/>
</dbReference>
<dbReference type="EMBL" id="AY054618">
    <property type="protein sequence ID" value="AAK96809.1"/>
    <property type="molecule type" value="mRNA"/>
</dbReference>
<dbReference type="EMBL" id="AY081543">
    <property type="protein sequence ID" value="AAM10105.1"/>
    <property type="molecule type" value="mRNA"/>
</dbReference>
<dbReference type="EMBL" id="AY060551">
    <property type="protein sequence ID" value="AAL31182.1"/>
    <property type="status" value="ALT_INIT"/>
    <property type="molecule type" value="mRNA"/>
</dbReference>
<dbReference type="EMBL" id="AY086472">
    <property type="protein sequence ID" value="AAM63474.1"/>
    <property type="molecule type" value="mRNA"/>
</dbReference>
<dbReference type="RefSeq" id="NP_567447.1">
    <property type="nucleotide sequence ID" value="NM_117576.3"/>
</dbReference>
<dbReference type="SMR" id="Q940H8"/>
<dbReference type="BioGRID" id="12444">
    <property type="interactions" value="10"/>
</dbReference>
<dbReference type="FunCoup" id="Q940H8">
    <property type="interactions" value="1180"/>
</dbReference>
<dbReference type="IntAct" id="Q940H8">
    <property type="interactions" value="10"/>
</dbReference>
<dbReference type="STRING" id="3702.Q940H8"/>
<dbReference type="PaxDb" id="3702-AT4G14900.1"/>
<dbReference type="EnsemblPlants" id="AT4G14900.1">
    <property type="protein sequence ID" value="AT4G14900.1"/>
    <property type="gene ID" value="AT4G14900"/>
</dbReference>
<dbReference type="GeneID" id="827147"/>
<dbReference type="Gramene" id="AT4G14900.1">
    <property type="protein sequence ID" value="AT4G14900.1"/>
    <property type="gene ID" value="AT4G14900"/>
</dbReference>
<dbReference type="KEGG" id="ath:AT4G14900"/>
<dbReference type="Araport" id="AT4G14900"/>
<dbReference type="TAIR" id="AT4G14900"/>
<dbReference type="eggNOG" id="ENOG502QVU4">
    <property type="taxonomic scope" value="Eukaryota"/>
</dbReference>
<dbReference type="HOGENOM" id="CLU_026883_3_0_1"/>
<dbReference type="InParanoid" id="Q940H8"/>
<dbReference type="OMA" id="HHIQHAY"/>
<dbReference type="PhylomeDB" id="Q940H8"/>
<dbReference type="PRO" id="PR:Q940H8"/>
<dbReference type="Proteomes" id="UP000006548">
    <property type="component" value="Chromosome 4"/>
</dbReference>
<dbReference type="ExpressionAtlas" id="Q940H8">
    <property type="expression patterns" value="baseline and differential"/>
</dbReference>
<dbReference type="GO" id="GO:0030154">
    <property type="term" value="P:cell differentiation"/>
    <property type="evidence" value="ECO:0007669"/>
    <property type="project" value="UniProtKB-KW"/>
</dbReference>
<dbReference type="GO" id="GO:0009908">
    <property type="term" value="P:flower development"/>
    <property type="evidence" value="ECO:0007669"/>
    <property type="project" value="UniProtKB-KW"/>
</dbReference>
<dbReference type="InterPro" id="IPR012474">
    <property type="entry name" value="Frigida"/>
</dbReference>
<dbReference type="PANTHER" id="PTHR31791">
    <property type="entry name" value="FRIGIDA-LIKE PROTEIN 3-RELATED"/>
    <property type="match status" value="1"/>
</dbReference>
<dbReference type="PANTHER" id="PTHR31791:SF2">
    <property type="entry name" value="FRIGIDA-LIKE PROTEIN 4A-RELATED"/>
    <property type="match status" value="1"/>
</dbReference>
<dbReference type="Pfam" id="PF07899">
    <property type="entry name" value="Frigida"/>
    <property type="match status" value="1"/>
</dbReference>
<accession>Q940H8</accession>
<accession>Q8W4S7</accession>
<reference key="1">
    <citation type="journal article" date="1999" name="Nature">
        <title>Sequence and analysis of chromosome 4 of the plant Arabidopsis thaliana.</title>
        <authorList>
            <person name="Mayer K.F.X."/>
            <person name="Schueller C."/>
            <person name="Wambutt R."/>
            <person name="Murphy G."/>
            <person name="Volckaert G."/>
            <person name="Pohl T."/>
            <person name="Duesterhoeft A."/>
            <person name="Stiekema W."/>
            <person name="Entian K.-D."/>
            <person name="Terryn N."/>
            <person name="Harris B."/>
            <person name="Ansorge W."/>
            <person name="Brandt P."/>
            <person name="Grivell L.A."/>
            <person name="Rieger M."/>
            <person name="Weichselgartner M."/>
            <person name="de Simone V."/>
            <person name="Obermaier B."/>
            <person name="Mache R."/>
            <person name="Mueller M."/>
            <person name="Kreis M."/>
            <person name="Delseny M."/>
            <person name="Puigdomenech P."/>
            <person name="Watson M."/>
            <person name="Schmidtheini T."/>
            <person name="Reichert B."/>
            <person name="Portetelle D."/>
            <person name="Perez-Alonso M."/>
            <person name="Boutry M."/>
            <person name="Bancroft I."/>
            <person name="Vos P."/>
            <person name="Hoheisel J."/>
            <person name="Zimmermann W."/>
            <person name="Wedler H."/>
            <person name="Ridley P."/>
            <person name="Langham S.-A."/>
            <person name="McCullagh B."/>
            <person name="Bilham L."/>
            <person name="Robben J."/>
            <person name="van der Schueren J."/>
            <person name="Grymonprez B."/>
            <person name="Chuang Y.-J."/>
            <person name="Vandenbussche F."/>
            <person name="Braeken M."/>
            <person name="Weltjens I."/>
            <person name="Voet M."/>
            <person name="Bastiaens I."/>
            <person name="Aert R."/>
            <person name="Defoor E."/>
            <person name="Weitzenegger T."/>
            <person name="Bothe G."/>
            <person name="Ramsperger U."/>
            <person name="Hilbert H."/>
            <person name="Braun M."/>
            <person name="Holzer E."/>
            <person name="Brandt A."/>
            <person name="Peters S."/>
            <person name="van Staveren M."/>
            <person name="Dirkse W."/>
            <person name="Mooijman P."/>
            <person name="Klein Lankhorst R."/>
            <person name="Rose M."/>
            <person name="Hauf J."/>
            <person name="Koetter P."/>
            <person name="Berneiser S."/>
            <person name="Hempel S."/>
            <person name="Feldpausch M."/>
            <person name="Lamberth S."/>
            <person name="Van den Daele H."/>
            <person name="De Keyser A."/>
            <person name="Buysshaert C."/>
            <person name="Gielen J."/>
            <person name="Villarroel R."/>
            <person name="De Clercq R."/>
            <person name="van Montagu M."/>
            <person name="Rogers J."/>
            <person name="Cronin A."/>
            <person name="Quail M.A."/>
            <person name="Bray-Allen S."/>
            <person name="Clark L."/>
            <person name="Doggett J."/>
            <person name="Hall S."/>
            <person name="Kay M."/>
            <person name="Lennard N."/>
            <person name="McLay K."/>
            <person name="Mayes R."/>
            <person name="Pettett A."/>
            <person name="Rajandream M.A."/>
            <person name="Lyne M."/>
            <person name="Benes V."/>
            <person name="Rechmann S."/>
            <person name="Borkova D."/>
            <person name="Bloecker H."/>
            <person name="Scharfe M."/>
            <person name="Grimm M."/>
            <person name="Loehnert T.-H."/>
            <person name="Dose S."/>
            <person name="de Haan M."/>
            <person name="Maarse A.C."/>
            <person name="Schaefer M."/>
            <person name="Mueller-Auer S."/>
            <person name="Gabel C."/>
            <person name="Fuchs M."/>
            <person name="Fartmann B."/>
            <person name="Granderath K."/>
            <person name="Dauner D."/>
            <person name="Herzl A."/>
            <person name="Neumann S."/>
            <person name="Argiriou A."/>
            <person name="Vitale D."/>
            <person name="Liguori R."/>
            <person name="Piravandi E."/>
            <person name="Massenet O."/>
            <person name="Quigley F."/>
            <person name="Clabauld G."/>
            <person name="Muendlein A."/>
            <person name="Felber R."/>
            <person name="Schnabl S."/>
            <person name="Hiller R."/>
            <person name="Schmidt W."/>
            <person name="Lecharny A."/>
            <person name="Aubourg S."/>
            <person name="Chefdor F."/>
            <person name="Cooke R."/>
            <person name="Berger C."/>
            <person name="Monfort A."/>
            <person name="Casacuberta E."/>
            <person name="Gibbons T."/>
            <person name="Weber N."/>
            <person name="Vandenbol M."/>
            <person name="Bargues M."/>
            <person name="Terol J."/>
            <person name="Torres A."/>
            <person name="Perez-Perez A."/>
            <person name="Purnelle B."/>
            <person name="Bent E."/>
            <person name="Johnson S."/>
            <person name="Tacon D."/>
            <person name="Jesse T."/>
            <person name="Heijnen L."/>
            <person name="Schwarz S."/>
            <person name="Scholler P."/>
            <person name="Heber S."/>
            <person name="Francs P."/>
            <person name="Bielke C."/>
            <person name="Frishman D."/>
            <person name="Haase D."/>
            <person name="Lemcke K."/>
            <person name="Mewes H.-W."/>
            <person name="Stocker S."/>
            <person name="Zaccaria P."/>
            <person name="Bevan M."/>
            <person name="Wilson R.K."/>
            <person name="de la Bastide M."/>
            <person name="Habermann K."/>
            <person name="Parnell L."/>
            <person name="Dedhia N."/>
            <person name="Gnoj L."/>
            <person name="Schutz K."/>
            <person name="Huang E."/>
            <person name="Spiegel L."/>
            <person name="Sekhon M."/>
            <person name="Murray J."/>
            <person name="Sheet P."/>
            <person name="Cordes M."/>
            <person name="Abu-Threideh J."/>
            <person name="Stoneking T."/>
            <person name="Kalicki J."/>
            <person name="Graves T."/>
            <person name="Harmon G."/>
            <person name="Edwards J."/>
            <person name="Latreille P."/>
            <person name="Courtney L."/>
            <person name="Cloud J."/>
            <person name="Abbott A."/>
            <person name="Scott K."/>
            <person name="Johnson D."/>
            <person name="Minx P."/>
            <person name="Bentley D."/>
            <person name="Fulton B."/>
            <person name="Miller N."/>
            <person name="Greco T."/>
            <person name="Kemp K."/>
            <person name="Kramer J."/>
            <person name="Fulton L."/>
            <person name="Mardis E."/>
            <person name="Dante M."/>
            <person name="Pepin K."/>
            <person name="Hillier L.W."/>
            <person name="Nelson J."/>
            <person name="Spieth J."/>
            <person name="Ryan E."/>
            <person name="Andrews S."/>
            <person name="Geisel C."/>
            <person name="Layman D."/>
            <person name="Du H."/>
            <person name="Ali J."/>
            <person name="Berghoff A."/>
            <person name="Jones K."/>
            <person name="Drone K."/>
            <person name="Cotton M."/>
            <person name="Joshu C."/>
            <person name="Antonoiu B."/>
            <person name="Zidanic M."/>
            <person name="Strong C."/>
            <person name="Sun H."/>
            <person name="Lamar B."/>
            <person name="Yordan C."/>
            <person name="Ma P."/>
            <person name="Zhong J."/>
            <person name="Preston R."/>
            <person name="Vil D."/>
            <person name="Shekher M."/>
            <person name="Matero A."/>
            <person name="Shah R."/>
            <person name="Swaby I.K."/>
            <person name="O'Shaughnessy A."/>
            <person name="Rodriguez M."/>
            <person name="Hoffman J."/>
            <person name="Till S."/>
            <person name="Granat S."/>
            <person name="Shohdy N."/>
            <person name="Hasegawa A."/>
            <person name="Hameed A."/>
            <person name="Lodhi M."/>
            <person name="Johnson A."/>
            <person name="Chen E."/>
            <person name="Marra M.A."/>
            <person name="Martienssen R."/>
            <person name="McCombie W.R."/>
        </authorList>
    </citation>
    <scope>NUCLEOTIDE SEQUENCE [LARGE SCALE GENOMIC DNA]</scope>
    <source>
        <strain>cv. Columbia</strain>
    </source>
</reference>
<reference key="2">
    <citation type="journal article" date="2017" name="Plant J.">
        <title>Araport11: a complete reannotation of the Arabidopsis thaliana reference genome.</title>
        <authorList>
            <person name="Cheng C.Y."/>
            <person name="Krishnakumar V."/>
            <person name="Chan A.P."/>
            <person name="Thibaud-Nissen F."/>
            <person name="Schobel S."/>
            <person name="Town C.D."/>
        </authorList>
    </citation>
    <scope>GENOME REANNOTATION</scope>
    <source>
        <strain>cv. Columbia</strain>
    </source>
</reference>
<reference key="3">
    <citation type="journal article" date="2003" name="Science">
        <title>Empirical analysis of transcriptional activity in the Arabidopsis genome.</title>
        <authorList>
            <person name="Yamada K."/>
            <person name="Lim J."/>
            <person name="Dale J.M."/>
            <person name="Chen H."/>
            <person name="Shinn P."/>
            <person name="Palm C.J."/>
            <person name="Southwick A.M."/>
            <person name="Wu H.C."/>
            <person name="Kim C.J."/>
            <person name="Nguyen M."/>
            <person name="Pham P.K."/>
            <person name="Cheuk R.F."/>
            <person name="Karlin-Newmann G."/>
            <person name="Liu S.X."/>
            <person name="Lam B."/>
            <person name="Sakano H."/>
            <person name="Wu T."/>
            <person name="Yu G."/>
            <person name="Miranda M."/>
            <person name="Quach H.L."/>
            <person name="Tripp M."/>
            <person name="Chang C.H."/>
            <person name="Lee J.M."/>
            <person name="Toriumi M.J."/>
            <person name="Chan M.M."/>
            <person name="Tang C.C."/>
            <person name="Onodera C.S."/>
            <person name="Deng J.M."/>
            <person name="Akiyama K."/>
            <person name="Ansari Y."/>
            <person name="Arakawa T."/>
            <person name="Banh J."/>
            <person name="Banno F."/>
            <person name="Bowser L."/>
            <person name="Brooks S.Y."/>
            <person name="Carninci P."/>
            <person name="Chao Q."/>
            <person name="Choy N."/>
            <person name="Enju A."/>
            <person name="Goldsmith A.D."/>
            <person name="Gurjal M."/>
            <person name="Hansen N.F."/>
            <person name="Hayashizaki Y."/>
            <person name="Johnson-Hopson C."/>
            <person name="Hsuan V.W."/>
            <person name="Iida K."/>
            <person name="Karnes M."/>
            <person name="Khan S."/>
            <person name="Koesema E."/>
            <person name="Ishida J."/>
            <person name="Jiang P.X."/>
            <person name="Jones T."/>
            <person name="Kawai J."/>
            <person name="Kamiya A."/>
            <person name="Meyers C."/>
            <person name="Nakajima M."/>
            <person name="Narusaka M."/>
            <person name="Seki M."/>
            <person name="Sakurai T."/>
            <person name="Satou M."/>
            <person name="Tamse R."/>
            <person name="Vaysberg M."/>
            <person name="Wallender E.K."/>
            <person name="Wong C."/>
            <person name="Yamamura Y."/>
            <person name="Yuan S."/>
            <person name="Shinozaki K."/>
            <person name="Davis R.W."/>
            <person name="Theologis A."/>
            <person name="Ecker J.R."/>
        </authorList>
    </citation>
    <scope>NUCLEOTIDE SEQUENCE [LARGE SCALE MRNA]</scope>
    <source>
        <strain>cv. Columbia</strain>
    </source>
</reference>
<reference key="4">
    <citation type="submission" date="2002-03" db="EMBL/GenBank/DDBJ databases">
        <title>Full-length cDNA from Arabidopsis thaliana.</title>
        <authorList>
            <person name="Brover V.V."/>
            <person name="Troukhan M.E."/>
            <person name="Alexandrov N.A."/>
            <person name="Lu Y.-P."/>
            <person name="Flavell R.B."/>
            <person name="Feldmann K.A."/>
        </authorList>
    </citation>
    <scope>NUCLEOTIDE SEQUENCE [LARGE SCALE MRNA]</scope>
</reference>
<reference key="5">
    <citation type="journal article" date="2004" name="Proc. Natl. Acad. Sci. U.S.A.">
        <title>FRIGIDA-related genes are required for the winter-annual habit in Arabidopsis.</title>
        <authorList>
            <person name="Michaels S.D."/>
            <person name="Bezerra I.C."/>
            <person name="Amasino R.M."/>
        </authorList>
    </citation>
    <scope>GENE FAMILY</scope>
</reference>
<reference key="6">
    <citation type="journal article" date="2010" name="Plant Mol. Biol.">
        <title>FRIGIDA and related proteins have a conserved central domain and family specific N- and C- terminal regions that are functionally important.</title>
        <authorList>
            <person name="Risk J.M."/>
            <person name="Laurie R.E."/>
            <person name="Macknight R.C."/>
            <person name="Day C.L."/>
        </authorList>
    </citation>
    <scope>GENE FAMILY</scope>
    <scope>NOMENCLATURE</scope>
    <scope>TISSUE SPECIFICITY</scope>
</reference>
<feature type="chain" id="PRO_0000423744" description="FRIGIDA-like protein 4b">
    <location>
        <begin position="1"/>
        <end position="532"/>
    </location>
</feature>
<organism>
    <name type="scientific">Arabidopsis thaliana</name>
    <name type="common">Mouse-ear cress</name>
    <dbReference type="NCBI Taxonomy" id="3702"/>
    <lineage>
        <taxon>Eukaryota</taxon>
        <taxon>Viridiplantae</taxon>
        <taxon>Streptophyta</taxon>
        <taxon>Embryophyta</taxon>
        <taxon>Tracheophyta</taxon>
        <taxon>Spermatophyta</taxon>
        <taxon>Magnoliopsida</taxon>
        <taxon>eudicotyledons</taxon>
        <taxon>Gunneridae</taxon>
        <taxon>Pentapetalae</taxon>
        <taxon>rosids</taxon>
        <taxon>malvids</taxon>
        <taxon>Brassicales</taxon>
        <taxon>Brassicaceae</taxon>
        <taxon>Camelineae</taxon>
        <taxon>Arabidopsis</taxon>
    </lineage>
</organism>
<name>FRL4B_ARATH</name>
<protein>
    <recommendedName>
        <fullName>FRIGIDA-like protein 4b</fullName>
    </recommendedName>
</protein>
<comment type="interaction">
    <interactant intactId="EBI-4442126">
        <id>Q940H8</id>
    </interactant>
    <interactant intactId="EBI-4440511">
        <id>Q67ZB3</id>
        <label>FRL3</label>
    </interactant>
    <organismsDiffer>false</organismsDiffer>
    <experiments>3</experiments>
</comment>
<comment type="tissue specificity">
    <text evidence="1">Expressed in leaves, shoot apex, flowers and during seed development.</text>
</comment>
<comment type="similarity">
    <text evidence="2">Belongs to the Frigida family.</text>
</comment>
<comment type="sequence caution" evidence="2">
    <conflict type="erroneous initiation">
        <sequence resource="EMBL-CDS" id="AAL31182"/>
    </conflict>
    <text>Truncated N-terminus.</text>
</comment>
<keyword id="KW-0217">Developmental protein</keyword>
<keyword id="KW-0221">Differentiation</keyword>
<keyword id="KW-0287">Flowering</keyword>
<keyword id="KW-1185">Reference proteome</keyword>